<sequence length="164" mass="19753">MPEQLKQRVETCYQQAEAFFKRRFPRPEVSFKLRGQKAGVAHLHENLLRFNLQLYRENQEDFLRQTVAHEVAHLVAHQLFGDRIQAHGEEWQLIMRGVYELPPNRCHNYDVQRRAVTRYIYRCPCPQSDFPFTAQRHKLVHQGRRYLCKRCREILVYSGETRVE</sequence>
<reference key="1">
    <citation type="submission" date="2007-05" db="EMBL/GenBank/DDBJ databases">
        <title>Complete sequence of Pseudomonas putida F1.</title>
        <authorList>
            <consortium name="US DOE Joint Genome Institute"/>
            <person name="Copeland A."/>
            <person name="Lucas S."/>
            <person name="Lapidus A."/>
            <person name="Barry K."/>
            <person name="Detter J.C."/>
            <person name="Glavina del Rio T."/>
            <person name="Hammon N."/>
            <person name="Israni S."/>
            <person name="Dalin E."/>
            <person name="Tice H."/>
            <person name="Pitluck S."/>
            <person name="Chain P."/>
            <person name="Malfatti S."/>
            <person name="Shin M."/>
            <person name="Vergez L."/>
            <person name="Schmutz J."/>
            <person name="Larimer F."/>
            <person name="Land M."/>
            <person name="Hauser L."/>
            <person name="Kyrpides N."/>
            <person name="Lykidis A."/>
            <person name="Parales R."/>
            <person name="Richardson P."/>
        </authorList>
    </citation>
    <scope>NUCLEOTIDE SEQUENCE [LARGE SCALE GENOMIC DNA]</scope>
    <source>
        <strain>ATCC 700007 / DSM 6899 / JCM 31910 / BCRC 17059 / LMG 24140 / F1</strain>
    </source>
</reference>
<gene>
    <name evidence="1" type="primary">sprT</name>
    <name type="ordered locus">Pput_4078</name>
</gene>
<dbReference type="EMBL" id="CP000712">
    <property type="protein sequence ID" value="ABQ80202.1"/>
    <property type="molecule type" value="Genomic_DNA"/>
</dbReference>
<dbReference type="KEGG" id="ppf:Pput_4078"/>
<dbReference type="eggNOG" id="COG3091">
    <property type="taxonomic scope" value="Bacteria"/>
</dbReference>
<dbReference type="HOGENOM" id="CLU_113336_0_1_6"/>
<dbReference type="GO" id="GO:0005737">
    <property type="term" value="C:cytoplasm"/>
    <property type="evidence" value="ECO:0007669"/>
    <property type="project" value="UniProtKB-SubCell"/>
</dbReference>
<dbReference type="GO" id="GO:0008270">
    <property type="term" value="F:zinc ion binding"/>
    <property type="evidence" value="ECO:0007669"/>
    <property type="project" value="UniProtKB-UniRule"/>
</dbReference>
<dbReference type="GO" id="GO:0006950">
    <property type="term" value="P:response to stress"/>
    <property type="evidence" value="ECO:0007669"/>
    <property type="project" value="UniProtKB-ARBA"/>
</dbReference>
<dbReference type="HAMAP" id="MF_00746">
    <property type="entry name" value="SprT"/>
    <property type="match status" value="1"/>
</dbReference>
<dbReference type="InterPro" id="IPR006640">
    <property type="entry name" value="SprT-like_domain"/>
</dbReference>
<dbReference type="InterPro" id="IPR023483">
    <property type="entry name" value="Uncharacterised_SprT"/>
</dbReference>
<dbReference type="NCBIfam" id="NF003421">
    <property type="entry name" value="PRK04860.1"/>
    <property type="match status" value="1"/>
</dbReference>
<dbReference type="PANTHER" id="PTHR38773">
    <property type="entry name" value="PROTEIN SPRT"/>
    <property type="match status" value="1"/>
</dbReference>
<dbReference type="PANTHER" id="PTHR38773:SF1">
    <property type="entry name" value="PROTEIN SPRT"/>
    <property type="match status" value="1"/>
</dbReference>
<dbReference type="Pfam" id="PF10263">
    <property type="entry name" value="SprT-like"/>
    <property type="match status" value="1"/>
</dbReference>
<dbReference type="SMART" id="SM00731">
    <property type="entry name" value="SprT"/>
    <property type="match status" value="1"/>
</dbReference>
<dbReference type="PROSITE" id="PS00142">
    <property type="entry name" value="ZINC_PROTEASE"/>
    <property type="match status" value="1"/>
</dbReference>
<feature type="chain" id="PRO_1000046535" description="Protein SprT">
    <location>
        <begin position="1"/>
        <end position="164"/>
    </location>
</feature>
<feature type="domain" description="SprT-like" evidence="1">
    <location>
        <begin position="13"/>
        <end position="156"/>
    </location>
</feature>
<feature type="active site" evidence="1">
    <location>
        <position position="70"/>
    </location>
</feature>
<feature type="binding site" evidence="1">
    <location>
        <position position="69"/>
    </location>
    <ligand>
        <name>Zn(2+)</name>
        <dbReference type="ChEBI" id="CHEBI:29105"/>
    </ligand>
</feature>
<feature type="binding site" evidence="1">
    <location>
        <position position="73"/>
    </location>
    <ligand>
        <name>Zn(2+)</name>
        <dbReference type="ChEBI" id="CHEBI:29105"/>
    </ligand>
</feature>
<accession>A5W7U2</accession>
<evidence type="ECO:0000255" key="1">
    <source>
        <dbReference type="HAMAP-Rule" id="MF_00746"/>
    </source>
</evidence>
<comment type="cofactor">
    <cofactor evidence="1">
        <name>Zn(2+)</name>
        <dbReference type="ChEBI" id="CHEBI:29105"/>
    </cofactor>
    <text evidence="1">Binds 1 zinc ion.</text>
</comment>
<comment type="subcellular location">
    <subcellularLocation>
        <location evidence="1">Cytoplasm</location>
    </subcellularLocation>
</comment>
<comment type="similarity">
    <text evidence="1">Belongs to the SprT family.</text>
</comment>
<keyword id="KW-0963">Cytoplasm</keyword>
<keyword id="KW-0479">Metal-binding</keyword>
<keyword id="KW-0862">Zinc</keyword>
<organism>
    <name type="scientific">Pseudomonas putida (strain ATCC 700007 / DSM 6899 / JCM 31910 / BCRC 17059 / LMG 24140 / F1)</name>
    <dbReference type="NCBI Taxonomy" id="351746"/>
    <lineage>
        <taxon>Bacteria</taxon>
        <taxon>Pseudomonadati</taxon>
        <taxon>Pseudomonadota</taxon>
        <taxon>Gammaproteobacteria</taxon>
        <taxon>Pseudomonadales</taxon>
        <taxon>Pseudomonadaceae</taxon>
        <taxon>Pseudomonas</taxon>
    </lineage>
</organism>
<name>SPRT_PSEP1</name>
<proteinExistence type="inferred from homology"/>
<protein>
    <recommendedName>
        <fullName evidence="1">Protein SprT</fullName>
    </recommendedName>
</protein>